<geneLocation type="chloroplast"/>
<protein>
    <recommendedName>
        <fullName evidence="1">Photosystem I reaction center subunit VIII</fullName>
        <shortName evidence="1">PSI-I</shortName>
    </recommendedName>
</protein>
<sequence length="36" mass="3853">MAASLLPSIFVPLVGLVFPAVAMASLFLYIEKEQVS</sequence>
<comment type="function">
    <text evidence="1">May help in the organization of the PsaL subunit.</text>
</comment>
<comment type="subcellular location">
    <subcellularLocation>
        <location evidence="1">Plastid</location>
        <location evidence="1">Chloroplast thylakoid membrane</location>
        <topology evidence="1">Single-pass membrane protein</topology>
    </subcellularLocation>
</comment>
<comment type="similarity">
    <text evidence="1">Belongs to the PsaI family.</text>
</comment>
<proteinExistence type="evidence at protein level"/>
<gene>
    <name evidence="1" type="primary">psaI</name>
    <name type="ordered locus">OtCpg00520</name>
</gene>
<feature type="chain" id="PRO_0000276031" description="Photosystem I reaction center subunit VIII">
    <location>
        <begin position="1"/>
        <end position="36"/>
    </location>
</feature>
<feature type="transmembrane region" description="Helical" evidence="1">
    <location>
        <begin position="9"/>
        <end position="29"/>
    </location>
</feature>
<feature type="helix" evidence="2">
    <location>
        <begin position="2"/>
        <end position="15"/>
    </location>
</feature>
<feature type="helix" evidence="2">
    <location>
        <begin position="17"/>
        <end position="31"/>
    </location>
</feature>
<accession>Q0P3K0</accession>
<organism>
    <name type="scientific">Ostreococcus tauri</name>
    <dbReference type="NCBI Taxonomy" id="70448"/>
    <lineage>
        <taxon>Eukaryota</taxon>
        <taxon>Viridiplantae</taxon>
        <taxon>Chlorophyta</taxon>
        <taxon>Mamiellophyceae</taxon>
        <taxon>Mamiellales</taxon>
        <taxon>Bathycoccaceae</taxon>
        <taxon>Ostreococcus</taxon>
    </lineage>
</organism>
<reference key="1">
    <citation type="journal article" date="2007" name="Mol. Biol. Evol.">
        <title>The complete chloroplast and mitochondrial DNA sequence of Ostreococcus tauri: organelle genomes of the smallest eukaryote are examples of compaction.</title>
        <authorList>
            <person name="Robbens S."/>
            <person name="Derelle E."/>
            <person name="Ferraz C."/>
            <person name="Wuyts J."/>
            <person name="Moreau H."/>
            <person name="Van de Peer Y."/>
        </authorList>
    </citation>
    <scope>NUCLEOTIDE SEQUENCE [LARGE SCALE GENOMIC DNA]</scope>
    <source>
        <strain>OTTH0595</strain>
    </source>
</reference>
<dbReference type="EMBL" id="CR954199">
    <property type="protein sequence ID" value="CAL36377.1"/>
    <property type="molecule type" value="Genomic_DNA"/>
</dbReference>
<dbReference type="RefSeq" id="YP_717255.1">
    <property type="nucleotide sequence ID" value="NC_008289.1"/>
</dbReference>
<dbReference type="PDB" id="7YCA">
    <property type="method" value="EM"/>
    <property type="resolution" value="2.94 A"/>
    <property type="chains" value="I=1-35"/>
</dbReference>
<dbReference type="PDBsum" id="7YCA"/>
<dbReference type="EMDB" id="EMD-33737"/>
<dbReference type="SMR" id="Q0P3K0"/>
<dbReference type="FunCoup" id="Q0P3K0">
    <property type="interactions" value="18"/>
</dbReference>
<dbReference type="STRING" id="70448.Q0P3K0"/>
<dbReference type="GeneID" id="4238876"/>
<dbReference type="KEGG" id="ota:OstapCp52"/>
<dbReference type="InParanoid" id="Q0P3K0"/>
<dbReference type="Proteomes" id="UP000009170">
    <property type="component" value="Chloroplast"/>
</dbReference>
<dbReference type="GO" id="GO:0009535">
    <property type="term" value="C:chloroplast thylakoid membrane"/>
    <property type="evidence" value="ECO:0007669"/>
    <property type="project" value="UniProtKB-SubCell"/>
</dbReference>
<dbReference type="GO" id="GO:0009522">
    <property type="term" value="C:photosystem I"/>
    <property type="evidence" value="ECO:0007669"/>
    <property type="project" value="UniProtKB-KW"/>
</dbReference>
<dbReference type="GO" id="GO:0015979">
    <property type="term" value="P:photosynthesis"/>
    <property type="evidence" value="ECO:0007669"/>
    <property type="project" value="UniProtKB-UniRule"/>
</dbReference>
<dbReference type="HAMAP" id="MF_00431">
    <property type="entry name" value="PSI_PsaI"/>
    <property type="match status" value="1"/>
</dbReference>
<dbReference type="InterPro" id="IPR001302">
    <property type="entry name" value="PSI_PsaI"/>
</dbReference>
<dbReference type="InterPro" id="IPR036357">
    <property type="entry name" value="PSI_PsaI_sf"/>
</dbReference>
<dbReference type="NCBIfam" id="NF008830">
    <property type="entry name" value="PRK11877.1"/>
    <property type="match status" value="1"/>
</dbReference>
<dbReference type="NCBIfam" id="TIGR03052">
    <property type="entry name" value="PS_I_psaI"/>
    <property type="match status" value="1"/>
</dbReference>
<dbReference type="PANTHER" id="PTHR35775">
    <property type="match status" value="1"/>
</dbReference>
<dbReference type="PANTHER" id="PTHR35775:SF2">
    <property type="entry name" value="PHOTOSYSTEM I REACTION CENTER SUBUNIT VIII"/>
    <property type="match status" value="1"/>
</dbReference>
<dbReference type="Pfam" id="PF00796">
    <property type="entry name" value="PSI_8"/>
    <property type="match status" value="1"/>
</dbReference>
<dbReference type="SUPFAM" id="SSF81540">
    <property type="entry name" value="Subunit VIII of photosystem I reaction centre, PsaI"/>
    <property type="match status" value="1"/>
</dbReference>
<evidence type="ECO:0000255" key="1">
    <source>
        <dbReference type="HAMAP-Rule" id="MF_00431"/>
    </source>
</evidence>
<evidence type="ECO:0007829" key="2">
    <source>
        <dbReference type="PDB" id="7YCA"/>
    </source>
</evidence>
<name>PSAI_OSTTA</name>
<keyword id="KW-0002">3D-structure</keyword>
<keyword id="KW-0150">Chloroplast</keyword>
<keyword id="KW-0472">Membrane</keyword>
<keyword id="KW-0602">Photosynthesis</keyword>
<keyword id="KW-0603">Photosystem I</keyword>
<keyword id="KW-0934">Plastid</keyword>
<keyword id="KW-1185">Reference proteome</keyword>
<keyword id="KW-0793">Thylakoid</keyword>
<keyword id="KW-0812">Transmembrane</keyword>
<keyword id="KW-1133">Transmembrane helix</keyword>